<evidence type="ECO:0000255" key="1">
    <source>
        <dbReference type="HAMAP-Rule" id="MF_00686"/>
    </source>
</evidence>
<protein>
    <recommendedName>
        <fullName evidence="1">Probable Fe(2+)-trafficking protein</fullName>
    </recommendedName>
</protein>
<keyword id="KW-0408">Iron</keyword>
<keyword id="KW-1185">Reference proteome</keyword>
<sequence>MTKVFCKKYHQELDAIPFQPLPGELGKKIHNEISNKAWQAWLAHQTILINEYRLNLIEPKAKEFLKEEMYKFLFEGKEEKPEQFSEI</sequence>
<reference key="1">
    <citation type="submission" date="2006-03" db="EMBL/GenBank/DDBJ databases">
        <title>Complete genome sequence of Francisella tularensis LVS (Live Vaccine Strain).</title>
        <authorList>
            <person name="Chain P."/>
            <person name="Larimer F."/>
            <person name="Land M."/>
            <person name="Stilwagen S."/>
            <person name="Larsson P."/>
            <person name="Bearden S."/>
            <person name="Chu M."/>
            <person name="Oyston P."/>
            <person name="Forsman M."/>
            <person name="Andersson S."/>
            <person name="Lindler L."/>
            <person name="Titball R."/>
            <person name="Garcia E."/>
        </authorList>
    </citation>
    <scope>NUCLEOTIDE SEQUENCE [LARGE SCALE GENOMIC DNA]</scope>
    <source>
        <strain>LVS</strain>
    </source>
</reference>
<feature type="chain" id="PRO_0000246100" description="Probable Fe(2+)-trafficking protein">
    <location>
        <begin position="1"/>
        <end position="87"/>
    </location>
</feature>
<dbReference type="EMBL" id="AM233362">
    <property type="protein sequence ID" value="CAJ80047.1"/>
    <property type="molecule type" value="Genomic_DNA"/>
</dbReference>
<dbReference type="RefSeq" id="WP_010031324.1">
    <property type="nucleotide sequence ID" value="NZ_CP009694.1"/>
</dbReference>
<dbReference type="SMR" id="Q2A205"/>
<dbReference type="KEGG" id="ftl:FTL_1608"/>
<dbReference type="Proteomes" id="UP000001944">
    <property type="component" value="Chromosome"/>
</dbReference>
<dbReference type="GO" id="GO:0005829">
    <property type="term" value="C:cytosol"/>
    <property type="evidence" value="ECO:0007669"/>
    <property type="project" value="TreeGrafter"/>
</dbReference>
<dbReference type="GO" id="GO:0005506">
    <property type="term" value="F:iron ion binding"/>
    <property type="evidence" value="ECO:0007669"/>
    <property type="project" value="UniProtKB-UniRule"/>
</dbReference>
<dbReference type="GO" id="GO:0034599">
    <property type="term" value="P:cellular response to oxidative stress"/>
    <property type="evidence" value="ECO:0007669"/>
    <property type="project" value="TreeGrafter"/>
</dbReference>
<dbReference type="Gene3D" id="1.10.3880.10">
    <property type="entry name" value="Fe(II) trafficking protein YggX"/>
    <property type="match status" value="1"/>
</dbReference>
<dbReference type="HAMAP" id="MF_00686">
    <property type="entry name" value="Fe_traffic_YggX"/>
    <property type="match status" value="1"/>
</dbReference>
<dbReference type="InterPro" id="IPR007457">
    <property type="entry name" value="Fe_traffick_prot_YggX"/>
</dbReference>
<dbReference type="InterPro" id="IPR036766">
    <property type="entry name" value="Fe_traffick_prot_YggX_sf"/>
</dbReference>
<dbReference type="NCBIfam" id="NF003817">
    <property type="entry name" value="PRK05408.1"/>
    <property type="match status" value="1"/>
</dbReference>
<dbReference type="PANTHER" id="PTHR36965">
    <property type="entry name" value="FE(2+)-TRAFFICKING PROTEIN-RELATED"/>
    <property type="match status" value="1"/>
</dbReference>
<dbReference type="PANTHER" id="PTHR36965:SF1">
    <property type="entry name" value="FE(2+)-TRAFFICKING PROTEIN-RELATED"/>
    <property type="match status" value="1"/>
</dbReference>
<dbReference type="Pfam" id="PF04362">
    <property type="entry name" value="Iron_traffic"/>
    <property type="match status" value="1"/>
</dbReference>
<dbReference type="PIRSF" id="PIRSF029827">
    <property type="entry name" value="Fe_traffic_YggX"/>
    <property type="match status" value="1"/>
</dbReference>
<dbReference type="SUPFAM" id="SSF111148">
    <property type="entry name" value="YggX-like"/>
    <property type="match status" value="1"/>
</dbReference>
<gene>
    <name type="ordered locus">FTL_1608</name>
</gene>
<accession>Q2A205</accession>
<organism>
    <name type="scientific">Francisella tularensis subsp. holarctica (strain LVS)</name>
    <dbReference type="NCBI Taxonomy" id="376619"/>
    <lineage>
        <taxon>Bacteria</taxon>
        <taxon>Pseudomonadati</taxon>
        <taxon>Pseudomonadota</taxon>
        <taxon>Gammaproteobacteria</taxon>
        <taxon>Thiotrichales</taxon>
        <taxon>Francisellaceae</taxon>
        <taxon>Francisella</taxon>
    </lineage>
</organism>
<name>FETP_FRATH</name>
<comment type="function">
    <text evidence="1">Could be a mediator in iron transactions between iron acquisition and iron-requiring processes, such as synthesis and/or repair of Fe-S clusters in biosynthetic enzymes.</text>
</comment>
<comment type="similarity">
    <text evidence="1">Belongs to the Fe(2+)-trafficking protein family.</text>
</comment>
<proteinExistence type="inferred from homology"/>